<sequence>MEDEIELKTAPADFRFPTTNQTRHCFTRYIEFHRCTTAKGEDANECERFAKYYRALCPGEWVDKWNEQRETGTFPGPL</sequence>
<proteinExistence type="evidence at transcript level"/>
<feature type="chain" id="PRO_0000412235" description="Cytochrome c oxidase subunit 6b-3">
    <location>
        <begin position="1"/>
        <end position="78"/>
    </location>
</feature>
<feature type="domain" description="CHCH" evidence="2">
    <location>
        <begin position="22"/>
        <end position="65"/>
    </location>
</feature>
<feature type="short sequence motif" description="Cx9C motif" evidence="2">
    <location>
        <begin position="25"/>
        <end position="35"/>
    </location>
</feature>
<feature type="short sequence motif" description="Cx10C motif" evidence="2">
    <location>
        <begin position="46"/>
        <end position="57"/>
    </location>
</feature>
<feature type="disulfide bond" evidence="2">
    <location>
        <begin position="25"/>
        <end position="57"/>
    </location>
</feature>
<feature type="disulfide bond" evidence="2">
    <location>
        <begin position="35"/>
        <end position="46"/>
    </location>
</feature>
<evidence type="ECO:0000250" key="1"/>
<evidence type="ECO:0000255" key="2">
    <source>
        <dbReference type="PROSITE-ProRule" id="PRU01150"/>
    </source>
</evidence>
<evidence type="ECO:0000269" key="3">
    <source>
    </source>
</evidence>
<evidence type="ECO:0000305" key="4"/>
<comment type="function">
    <text>This protein is one of the nuclear-coded polypeptide chains of cytochrome c oxidase, the terminal oxidase in mitochondrial electron transport. This protein may be one of the heme-binding subunits of the oxidase.</text>
</comment>
<comment type="subcellular location">
    <subcellularLocation>
        <location evidence="1">Mitochondrion</location>
    </subcellularLocation>
</comment>
<comment type="tissue specificity">
    <text evidence="3">Expressed in the whole plant.</text>
</comment>
<comment type="similarity">
    <text evidence="4">Belongs to the cytochrome c oxidase subunit 6B (TC 3.D.4.8) family.</text>
</comment>
<comment type="sequence caution" evidence="4">
    <conflict type="erroneous gene model prediction">
        <sequence resource="EMBL-CDS" id="CAB36775"/>
    </conflict>
</comment>
<comment type="sequence caution" evidence="4">
    <conflict type="erroneous gene model prediction">
        <sequence resource="EMBL-CDS" id="CAB79608"/>
    </conflict>
</comment>
<keyword id="KW-1015">Disulfide bond</keyword>
<keyword id="KW-0496">Mitochondrion</keyword>
<keyword id="KW-1185">Reference proteome</keyword>
<accession>Q9SUD3</accession>
<accession>F4JKH2</accession>
<dbReference type="EMBL" id="AL035524">
    <property type="protein sequence ID" value="CAB36775.1"/>
    <property type="status" value="ALT_SEQ"/>
    <property type="molecule type" value="Genomic_DNA"/>
</dbReference>
<dbReference type="EMBL" id="AL161572">
    <property type="protein sequence ID" value="CAB79608.1"/>
    <property type="status" value="ALT_SEQ"/>
    <property type="molecule type" value="Genomic_DNA"/>
</dbReference>
<dbReference type="EMBL" id="CP002687">
    <property type="protein sequence ID" value="AEE85432.1"/>
    <property type="molecule type" value="Genomic_DNA"/>
</dbReference>
<dbReference type="PIR" id="T02907">
    <property type="entry name" value="T02907"/>
</dbReference>
<dbReference type="RefSeq" id="NP_194535.2">
    <property type="nucleotide sequence ID" value="NM_118945.3"/>
</dbReference>
<dbReference type="SMR" id="Q9SUD3"/>
<dbReference type="FunCoup" id="Q9SUD3">
    <property type="interactions" value="2775"/>
</dbReference>
<dbReference type="STRING" id="3702.Q9SUD3"/>
<dbReference type="PaxDb" id="3702-AT4G28060.1"/>
<dbReference type="ProteomicsDB" id="220430"/>
<dbReference type="EnsemblPlants" id="AT4G28060.1">
    <property type="protein sequence ID" value="AT4G28060.1"/>
    <property type="gene ID" value="AT4G28060"/>
</dbReference>
<dbReference type="GeneID" id="828921"/>
<dbReference type="Gramene" id="AT4G28060.1">
    <property type="protein sequence ID" value="AT4G28060.1"/>
    <property type="gene ID" value="AT4G28060"/>
</dbReference>
<dbReference type="KEGG" id="ath:AT4G28060"/>
<dbReference type="Araport" id="AT4G28060"/>
<dbReference type="TAIR" id="AT4G28060"/>
<dbReference type="eggNOG" id="KOG3057">
    <property type="taxonomic scope" value="Eukaryota"/>
</dbReference>
<dbReference type="HOGENOM" id="CLU_133964_2_0_1"/>
<dbReference type="InParanoid" id="Q9SUD3"/>
<dbReference type="OMA" id="WDGQRDD"/>
<dbReference type="PRO" id="PR:Q9SUD3"/>
<dbReference type="Proteomes" id="UP000006548">
    <property type="component" value="Chromosome 4"/>
</dbReference>
<dbReference type="ExpressionAtlas" id="Q9SUD3">
    <property type="expression patterns" value="baseline and differential"/>
</dbReference>
<dbReference type="GO" id="GO:0005739">
    <property type="term" value="C:mitochondrion"/>
    <property type="evidence" value="ECO:0007005"/>
    <property type="project" value="TAIR"/>
</dbReference>
<dbReference type="GO" id="GO:0005886">
    <property type="term" value="C:plasma membrane"/>
    <property type="evidence" value="ECO:0007005"/>
    <property type="project" value="TAIR"/>
</dbReference>
<dbReference type="GO" id="GO:0045277">
    <property type="term" value="C:respiratory chain complex IV"/>
    <property type="evidence" value="ECO:0007669"/>
    <property type="project" value="InterPro"/>
</dbReference>
<dbReference type="CDD" id="cd00926">
    <property type="entry name" value="Cyt_c_Oxidase_VIb"/>
    <property type="match status" value="1"/>
</dbReference>
<dbReference type="FunFam" id="1.10.10.140:FF:000004">
    <property type="entry name" value="Cytochrome c oxidase subunit"/>
    <property type="match status" value="1"/>
</dbReference>
<dbReference type="Gene3D" id="1.10.10.140">
    <property type="entry name" value="Cytochrome c oxidase, subunit VIb"/>
    <property type="match status" value="1"/>
</dbReference>
<dbReference type="InterPro" id="IPR048280">
    <property type="entry name" value="COX6B-like"/>
</dbReference>
<dbReference type="InterPro" id="IPR036549">
    <property type="entry name" value="CX6/COA6-like_sf"/>
</dbReference>
<dbReference type="InterPro" id="IPR003213">
    <property type="entry name" value="Cyt_c_oxidase_su6B"/>
</dbReference>
<dbReference type="PANTHER" id="PTHR46281:SF8">
    <property type="entry name" value="CYTOCHROME C OXIDASE SUBUNIT 12, MITOCHONDRIAL"/>
    <property type="match status" value="1"/>
</dbReference>
<dbReference type="PANTHER" id="PTHR46281">
    <property type="entry name" value="CYTOCHROME C OXIDASE SUBUNIT 6B"/>
    <property type="match status" value="1"/>
</dbReference>
<dbReference type="Pfam" id="PF02297">
    <property type="entry name" value="COX6B"/>
    <property type="match status" value="1"/>
</dbReference>
<dbReference type="PIRSF" id="PIRSF000278">
    <property type="entry name" value="Cyt_c_oxidase_6B"/>
    <property type="match status" value="1"/>
</dbReference>
<dbReference type="SUPFAM" id="SSF47694">
    <property type="entry name" value="Cytochrome c oxidase subunit h"/>
    <property type="match status" value="1"/>
</dbReference>
<dbReference type="PROSITE" id="PS51808">
    <property type="entry name" value="CHCH"/>
    <property type="match status" value="1"/>
</dbReference>
<organism>
    <name type="scientific">Arabidopsis thaliana</name>
    <name type="common">Mouse-ear cress</name>
    <dbReference type="NCBI Taxonomy" id="3702"/>
    <lineage>
        <taxon>Eukaryota</taxon>
        <taxon>Viridiplantae</taxon>
        <taxon>Streptophyta</taxon>
        <taxon>Embryophyta</taxon>
        <taxon>Tracheophyta</taxon>
        <taxon>Spermatophyta</taxon>
        <taxon>Magnoliopsida</taxon>
        <taxon>eudicotyledons</taxon>
        <taxon>Gunneridae</taxon>
        <taxon>Pentapetalae</taxon>
        <taxon>rosids</taxon>
        <taxon>malvids</taxon>
        <taxon>Brassicales</taxon>
        <taxon>Brassicaceae</taxon>
        <taxon>Camelineae</taxon>
        <taxon>Arabidopsis</taxon>
    </lineage>
</organism>
<reference key="1">
    <citation type="journal article" date="1999" name="Nature">
        <title>Sequence and analysis of chromosome 4 of the plant Arabidopsis thaliana.</title>
        <authorList>
            <person name="Mayer K.F.X."/>
            <person name="Schueller C."/>
            <person name="Wambutt R."/>
            <person name="Murphy G."/>
            <person name="Volckaert G."/>
            <person name="Pohl T."/>
            <person name="Duesterhoeft A."/>
            <person name="Stiekema W."/>
            <person name="Entian K.-D."/>
            <person name="Terryn N."/>
            <person name="Harris B."/>
            <person name="Ansorge W."/>
            <person name="Brandt P."/>
            <person name="Grivell L.A."/>
            <person name="Rieger M."/>
            <person name="Weichselgartner M."/>
            <person name="de Simone V."/>
            <person name="Obermaier B."/>
            <person name="Mache R."/>
            <person name="Mueller M."/>
            <person name="Kreis M."/>
            <person name="Delseny M."/>
            <person name="Puigdomenech P."/>
            <person name="Watson M."/>
            <person name="Schmidtheini T."/>
            <person name="Reichert B."/>
            <person name="Portetelle D."/>
            <person name="Perez-Alonso M."/>
            <person name="Boutry M."/>
            <person name="Bancroft I."/>
            <person name="Vos P."/>
            <person name="Hoheisel J."/>
            <person name="Zimmermann W."/>
            <person name="Wedler H."/>
            <person name="Ridley P."/>
            <person name="Langham S.-A."/>
            <person name="McCullagh B."/>
            <person name="Bilham L."/>
            <person name="Robben J."/>
            <person name="van der Schueren J."/>
            <person name="Grymonprez B."/>
            <person name="Chuang Y.-J."/>
            <person name="Vandenbussche F."/>
            <person name="Braeken M."/>
            <person name="Weltjens I."/>
            <person name="Voet M."/>
            <person name="Bastiaens I."/>
            <person name="Aert R."/>
            <person name="Defoor E."/>
            <person name="Weitzenegger T."/>
            <person name="Bothe G."/>
            <person name="Ramsperger U."/>
            <person name="Hilbert H."/>
            <person name="Braun M."/>
            <person name="Holzer E."/>
            <person name="Brandt A."/>
            <person name="Peters S."/>
            <person name="van Staveren M."/>
            <person name="Dirkse W."/>
            <person name="Mooijman P."/>
            <person name="Klein Lankhorst R."/>
            <person name="Rose M."/>
            <person name="Hauf J."/>
            <person name="Koetter P."/>
            <person name="Berneiser S."/>
            <person name="Hempel S."/>
            <person name="Feldpausch M."/>
            <person name="Lamberth S."/>
            <person name="Van den Daele H."/>
            <person name="De Keyser A."/>
            <person name="Buysshaert C."/>
            <person name="Gielen J."/>
            <person name="Villarroel R."/>
            <person name="De Clercq R."/>
            <person name="van Montagu M."/>
            <person name="Rogers J."/>
            <person name="Cronin A."/>
            <person name="Quail M.A."/>
            <person name="Bray-Allen S."/>
            <person name="Clark L."/>
            <person name="Doggett J."/>
            <person name="Hall S."/>
            <person name="Kay M."/>
            <person name="Lennard N."/>
            <person name="McLay K."/>
            <person name="Mayes R."/>
            <person name="Pettett A."/>
            <person name="Rajandream M.A."/>
            <person name="Lyne M."/>
            <person name="Benes V."/>
            <person name="Rechmann S."/>
            <person name="Borkova D."/>
            <person name="Bloecker H."/>
            <person name="Scharfe M."/>
            <person name="Grimm M."/>
            <person name="Loehnert T.-H."/>
            <person name="Dose S."/>
            <person name="de Haan M."/>
            <person name="Maarse A.C."/>
            <person name="Schaefer M."/>
            <person name="Mueller-Auer S."/>
            <person name="Gabel C."/>
            <person name="Fuchs M."/>
            <person name="Fartmann B."/>
            <person name="Granderath K."/>
            <person name="Dauner D."/>
            <person name="Herzl A."/>
            <person name="Neumann S."/>
            <person name="Argiriou A."/>
            <person name="Vitale D."/>
            <person name="Liguori R."/>
            <person name="Piravandi E."/>
            <person name="Massenet O."/>
            <person name="Quigley F."/>
            <person name="Clabauld G."/>
            <person name="Muendlein A."/>
            <person name="Felber R."/>
            <person name="Schnabl S."/>
            <person name="Hiller R."/>
            <person name="Schmidt W."/>
            <person name="Lecharny A."/>
            <person name="Aubourg S."/>
            <person name="Chefdor F."/>
            <person name="Cooke R."/>
            <person name="Berger C."/>
            <person name="Monfort A."/>
            <person name="Casacuberta E."/>
            <person name="Gibbons T."/>
            <person name="Weber N."/>
            <person name="Vandenbol M."/>
            <person name="Bargues M."/>
            <person name="Terol J."/>
            <person name="Torres A."/>
            <person name="Perez-Perez A."/>
            <person name="Purnelle B."/>
            <person name="Bent E."/>
            <person name="Johnson S."/>
            <person name="Tacon D."/>
            <person name="Jesse T."/>
            <person name="Heijnen L."/>
            <person name="Schwarz S."/>
            <person name="Scholler P."/>
            <person name="Heber S."/>
            <person name="Francs P."/>
            <person name="Bielke C."/>
            <person name="Frishman D."/>
            <person name="Haase D."/>
            <person name="Lemcke K."/>
            <person name="Mewes H.-W."/>
            <person name="Stocker S."/>
            <person name="Zaccaria P."/>
            <person name="Bevan M."/>
            <person name="Wilson R.K."/>
            <person name="de la Bastide M."/>
            <person name="Habermann K."/>
            <person name="Parnell L."/>
            <person name="Dedhia N."/>
            <person name="Gnoj L."/>
            <person name="Schutz K."/>
            <person name="Huang E."/>
            <person name="Spiegel L."/>
            <person name="Sekhon M."/>
            <person name="Murray J."/>
            <person name="Sheet P."/>
            <person name="Cordes M."/>
            <person name="Abu-Threideh J."/>
            <person name="Stoneking T."/>
            <person name="Kalicki J."/>
            <person name="Graves T."/>
            <person name="Harmon G."/>
            <person name="Edwards J."/>
            <person name="Latreille P."/>
            <person name="Courtney L."/>
            <person name="Cloud J."/>
            <person name="Abbott A."/>
            <person name="Scott K."/>
            <person name="Johnson D."/>
            <person name="Minx P."/>
            <person name="Bentley D."/>
            <person name="Fulton B."/>
            <person name="Miller N."/>
            <person name="Greco T."/>
            <person name="Kemp K."/>
            <person name="Kramer J."/>
            <person name="Fulton L."/>
            <person name="Mardis E."/>
            <person name="Dante M."/>
            <person name="Pepin K."/>
            <person name="Hillier L.W."/>
            <person name="Nelson J."/>
            <person name="Spieth J."/>
            <person name="Ryan E."/>
            <person name="Andrews S."/>
            <person name="Geisel C."/>
            <person name="Layman D."/>
            <person name="Du H."/>
            <person name="Ali J."/>
            <person name="Berghoff A."/>
            <person name="Jones K."/>
            <person name="Drone K."/>
            <person name="Cotton M."/>
            <person name="Joshu C."/>
            <person name="Antonoiu B."/>
            <person name="Zidanic M."/>
            <person name="Strong C."/>
            <person name="Sun H."/>
            <person name="Lamar B."/>
            <person name="Yordan C."/>
            <person name="Ma P."/>
            <person name="Zhong J."/>
            <person name="Preston R."/>
            <person name="Vil D."/>
            <person name="Shekher M."/>
            <person name="Matero A."/>
            <person name="Shah R."/>
            <person name="Swaby I.K."/>
            <person name="O'Shaughnessy A."/>
            <person name="Rodriguez M."/>
            <person name="Hoffman J."/>
            <person name="Till S."/>
            <person name="Granat S."/>
            <person name="Shohdy N."/>
            <person name="Hasegawa A."/>
            <person name="Hameed A."/>
            <person name="Lodhi M."/>
            <person name="Johnson A."/>
            <person name="Chen E."/>
            <person name="Marra M.A."/>
            <person name="Martienssen R."/>
            <person name="McCombie W.R."/>
        </authorList>
    </citation>
    <scope>NUCLEOTIDE SEQUENCE [LARGE SCALE GENOMIC DNA]</scope>
    <source>
        <strain>cv. Columbia</strain>
    </source>
</reference>
<reference key="2">
    <citation type="journal article" date="2017" name="Plant J.">
        <title>Araport11: a complete reannotation of the Arabidopsis thaliana reference genome.</title>
        <authorList>
            <person name="Cheng C.Y."/>
            <person name="Krishnakumar V."/>
            <person name="Chan A.P."/>
            <person name="Thibaud-Nissen F."/>
            <person name="Schobel S."/>
            <person name="Town C.D."/>
        </authorList>
    </citation>
    <scope>GENOME REANNOTATION</scope>
    <source>
        <strain>cv. Columbia</strain>
    </source>
</reference>
<reference key="3">
    <citation type="journal article" date="2001" name="Gene">
        <title>Characterization and expression of the genes for cytochrome c oxidase subunit VIb (COX6b) from rice and Arabidopsis thaliana.</title>
        <authorList>
            <person name="Ohtsu K."/>
            <person name="Nakazono M."/>
            <person name="Tsutsumi N."/>
            <person name="Hirai A."/>
        </authorList>
    </citation>
    <scope>GENE FAMILY</scope>
    <scope>NOMENCLATURE</scope>
    <scope>TISSUE SPECIFICITY</scope>
</reference>
<gene>
    <name type="primary">COX6B-3</name>
    <name type="ordered locus">At4g28060</name>
    <name type="ORF">T13J8.170</name>
</gene>
<name>CX6B3_ARATH</name>
<protein>
    <recommendedName>
        <fullName>Cytochrome c oxidase subunit 6b-3</fullName>
        <shortName>AtCOX6b-3</shortName>
    </recommendedName>
</protein>